<accession>P34361</accession>
<proteinExistence type="predicted"/>
<name>YLH7_CAEEL</name>
<gene>
    <name type="ORF">C48B4.7</name>
</gene>
<protein>
    <recommendedName>
        <fullName>Uncharacterized protein C48B4.7</fullName>
    </recommendedName>
</protein>
<feature type="chain" id="PRO_0000065248" description="Uncharacterized protein C48B4.7">
    <location>
        <begin position="1"/>
        <end position="159"/>
    </location>
</feature>
<sequence>MTHFETRPLCSLNSPLLCGFFPIKLAVLLVQLIAIVIQFCMLYYNGNQEEIVFVAMVLLLVFTISSFVAFLGEYGTMMAIHYYVSCILLIWPAVVFIMKLISLCNKLFIEENATSRDAKDFMKITAILFAVIFYIWMCLQLIRVAKSRLILPRFTIRSN</sequence>
<keyword id="KW-1185">Reference proteome</keyword>
<organism>
    <name type="scientific">Caenorhabditis elegans</name>
    <dbReference type="NCBI Taxonomy" id="6239"/>
    <lineage>
        <taxon>Eukaryota</taxon>
        <taxon>Metazoa</taxon>
        <taxon>Ecdysozoa</taxon>
        <taxon>Nematoda</taxon>
        <taxon>Chromadorea</taxon>
        <taxon>Rhabditida</taxon>
        <taxon>Rhabditina</taxon>
        <taxon>Rhabditomorpha</taxon>
        <taxon>Rhabditoidea</taxon>
        <taxon>Rhabditidae</taxon>
        <taxon>Peloderinae</taxon>
        <taxon>Caenorhabditis</taxon>
    </lineage>
</organism>
<reference key="1">
    <citation type="journal article" date="1994" name="Nature">
        <title>2.2 Mb of contiguous nucleotide sequence from chromosome III of C. elegans.</title>
        <authorList>
            <person name="Wilson R."/>
            <person name="Ainscough R."/>
            <person name="Anderson K."/>
            <person name="Baynes C."/>
            <person name="Berks M."/>
            <person name="Bonfield J."/>
            <person name="Burton J."/>
            <person name="Connell M."/>
            <person name="Copsey T."/>
            <person name="Cooper J."/>
            <person name="Coulson A."/>
            <person name="Craxton M."/>
            <person name="Dear S."/>
            <person name="Du Z."/>
            <person name="Durbin R."/>
            <person name="Favello A."/>
            <person name="Fraser A."/>
            <person name="Fulton L."/>
            <person name="Gardner A."/>
            <person name="Green P."/>
            <person name="Hawkins T."/>
            <person name="Hillier L."/>
            <person name="Jier M."/>
            <person name="Johnston L."/>
            <person name="Jones M."/>
            <person name="Kershaw J."/>
            <person name="Kirsten J."/>
            <person name="Laisster N."/>
            <person name="Latreille P."/>
            <person name="Lightning J."/>
            <person name="Lloyd C."/>
            <person name="Mortimore B."/>
            <person name="O'Callaghan M."/>
            <person name="Parsons J."/>
            <person name="Percy C."/>
            <person name="Rifken L."/>
            <person name="Roopra A."/>
            <person name="Saunders D."/>
            <person name="Shownkeen R."/>
            <person name="Sims M."/>
            <person name="Smaldon N."/>
            <person name="Smith A."/>
            <person name="Smith M."/>
            <person name="Sonnhammer E."/>
            <person name="Staden R."/>
            <person name="Sulston J."/>
            <person name="Thierry-Mieg J."/>
            <person name="Thomas K."/>
            <person name="Vaudin M."/>
            <person name="Vaughan K."/>
            <person name="Waterston R."/>
            <person name="Watson A."/>
            <person name="Weinstock L."/>
            <person name="Wilkinson-Sproat J."/>
            <person name="Wohldman P."/>
        </authorList>
    </citation>
    <scope>NUCLEOTIDE SEQUENCE [LARGE SCALE GENOMIC DNA]</scope>
    <source>
        <strain>Bristol N2</strain>
    </source>
</reference>
<reference key="2">
    <citation type="journal article" date="1998" name="Science">
        <title>Genome sequence of the nematode C. elegans: a platform for investigating biology.</title>
        <authorList>
            <consortium name="The C. elegans sequencing consortium"/>
        </authorList>
    </citation>
    <scope>NUCLEOTIDE SEQUENCE [LARGE SCALE GENOMIC DNA]</scope>
    <source>
        <strain>Bristol N2</strain>
    </source>
</reference>
<dbReference type="EMBL" id="Z29117">
    <property type="protein sequence ID" value="CAA82379.1"/>
    <property type="molecule type" value="Genomic_DNA"/>
</dbReference>
<dbReference type="PIR" id="S40727">
    <property type="entry name" value="S40727"/>
</dbReference>
<dbReference type="RefSeq" id="NP_001379053.1">
    <property type="nucleotide sequence ID" value="NM_001392178.1"/>
</dbReference>
<dbReference type="RefSeq" id="NP_499110.1">
    <property type="nucleotide sequence ID" value="NM_066709.3"/>
</dbReference>
<dbReference type="FunCoup" id="P34361">
    <property type="interactions" value="835"/>
</dbReference>
<dbReference type="STRING" id="6239.C48B4.7.1"/>
<dbReference type="PaxDb" id="6239-C48B4.7"/>
<dbReference type="EnsemblMetazoa" id="C48B4.7.1">
    <property type="protein sequence ID" value="C48B4.7.1"/>
    <property type="gene ID" value="WBGene00008170"/>
</dbReference>
<dbReference type="GeneID" id="176350"/>
<dbReference type="UCSC" id="C48B4.7">
    <property type="organism name" value="c. elegans"/>
</dbReference>
<dbReference type="AGR" id="WB:WBGene00008170"/>
<dbReference type="WormBase" id="C48B4.7">
    <property type="protein sequence ID" value="CE00483"/>
    <property type="gene ID" value="WBGene00008170"/>
</dbReference>
<dbReference type="eggNOG" id="ENOG502TIZN">
    <property type="taxonomic scope" value="Eukaryota"/>
</dbReference>
<dbReference type="HOGENOM" id="CLU_1929539_0_0_1"/>
<dbReference type="InParanoid" id="P34361"/>
<dbReference type="OMA" id="IFEMCIN"/>
<dbReference type="OrthoDB" id="5818524at2759"/>
<dbReference type="PRO" id="PR:P34361"/>
<dbReference type="Proteomes" id="UP000001940">
    <property type="component" value="Chromosome III"/>
</dbReference>
<dbReference type="Bgee" id="WBGene00008170">
    <property type="expression patterns" value="Expressed in germ line (C elegans) and 4 other cell types or tissues"/>
</dbReference>
<dbReference type="InterPro" id="IPR035321">
    <property type="entry name" value="DUF5373"/>
</dbReference>
<dbReference type="Pfam" id="PF17343">
    <property type="entry name" value="DUF5373"/>
    <property type="match status" value="1"/>
</dbReference>